<protein>
    <recommendedName>
        <fullName evidence="1">Epoxyqueuosine reductase</fullName>
        <ecNumber evidence="1">1.17.99.6</ecNumber>
    </recommendedName>
    <alternativeName>
        <fullName evidence="1">Queuosine biosynthesis protein QueG</fullName>
    </alternativeName>
</protein>
<name>QUEG_CYCMS</name>
<reference key="1">
    <citation type="submission" date="2011-07" db="EMBL/GenBank/DDBJ databases">
        <title>The complete genome of Cyclobacterium marinum DSM 745.</title>
        <authorList>
            <person name="Lucas S."/>
            <person name="Han J."/>
            <person name="Lapidus A."/>
            <person name="Bruce D."/>
            <person name="Goodwin L."/>
            <person name="Pitluck S."/>
            <person name="Peters L."/>
            <person name="Kyrpides N."/>
            <person name="Mavromatis K."/>
            <person name="Ivanova N."/>
            <person name="Ovchinnikova G."/>
            <person name="Chertkov O."/>
            <person name="Detter J.C."/>
            <person name="Tapia R."/>
            <person name="Han C."/>
            <person name="Land M."/>
            <person name="Hauser L."/>
            <person name="Markowitz V."/>
            <person name="Cheng J.-F."/>
            <person name="Hugenholtz P."/>
            <person name="Woyke T."/>
            <person name="Wu D."/>
            <person name="Tindall B."/>
            <person name="Schuetze A."/>
            <person name="Brambilla E."/>
            <person name="Klenk H.-P."/>
            <person name="Eisen J.A."/>
        </authorList>
    </citation>
    <scope>NUCLEOTIDE SEQUENCE [LARGE SCALE GENOMIC DNA]</scope>
    <source>
        <strain>ATCC 25205 / DSM 745 / LMG 13164 / NCIMB 1802</strain>
    </source>
</reference>
<proteinExistence type="inferred from homology"/>
<accession>G0J2F8</accession>
<evidence type="ECO:0000255" key="1">
    <source>
        <dbReference type="HAMAP-Rule" id="MF_00916"/>
    </source>
</evidence>
<feature type="chain" id="PRO_0000416068" description="Epoxyqueuosine reductase">
    <location>
        <begin position="1"/>
        <end position="310"/>
    </location>
</feature>
<feature type="domain" description="4Fe-4S ferredoxin-type" evidence="1">
    <location>
        <begin position="179"/>
        <end position="208"/>
    </location>
</feature>
<feature type="active site" description="Proton donor" evidence="1">
    <location>
        <position position="133"/>
    </location>
</feature>
<feature type="binding site" evidence="1">
    <location>
        <position position="188"/>
    </location>
    <ligand>
        <name>[4Fe-4S] cluster</name>
        <dbReference type="ChEBI" id="CHEBI:49883"/>
        <label>1</label>
    </ligand>
</feature>
<feature type="binding site" evidence="1">
    <location>
        <position position="191"/>
    </location>
    <ligand>
        <name>[4Fe-4S] cluster</name>
        <dbReference type="ChEBI" id="CHEBI:49883"/>
        <label>1</label>
    </ligand>
</feature>
<feature type="binding site" evidence="1">
    <location>
        <position position="194"/>
    </location>
    <ligand>
        <name>[4Fe-4S] cluster</name>
        <dbReference type="ChEBI" id="CHEBI:49883"/>
        <label>1</label>
    </ligand>
</feature>
<feature type="binding site" evidence="1">
    <location>
        <position position="198"/>
    </location>
    <ligand>
        <name>[4Fe-4S] cluster</name>
        <dbReference type="ChEBI" id="CHEBI:49883"/>
        <label>2</label>
    </ligand>
</feature>
<feature type="binding site" evidence="1">
    <location>
        <position position="214"/>
    </location>
    <ligand>
        <name>[4Fe-4S] cluster</name>
        <dbReference type="ChEBI" id="CHEBI:49883"/>
        <label>2</label>
    </ligand>
</feature>
<feature type="binding site" evidence="1">
    <location>
        <position position="241"/>
    </location>
    <ligand>
        <name>[4Fe-4S] cluster</name>
        <dbReference type="ChEBI" id="CHEBI:49883"/>
        <label>2</label>
    </ligand>
</feature>
<feature type="binding site" evidence="1">
    <location>
        <position position="244"/>
    </location>
    <ligand>
        <name>[4Fe-4S] cluster</name>
        <dbReference type="ChEBI" id="CHEBI:49883"/>
        <label>2</label>
    </ligand>
</feature>
<feature type="binding site" evidence="1">
    <location>
        <position position="248"/>
    </location>
    <ligand>
        <name>[4Fe-4S] cluster</name>
        <dbReference type="ChEBI" id="CHEBI:49883"/>
        <label>1</label>
    </ligand>
</feature>
<sequence>MSTIEKHTQIVKKTASKLGFDYCGIAEATFLEEEAPKLENWLNKNYHGKMAYMANHFDKRLDPRKLVEGAKSVVSLMFNYYPQQNLDESRNALKIAKYAYGEDYHFVIKDKLKEFLKCLKEEIGEVHGRVFVDSAPVMERQWAVKAGLGWKGKNSLLLNKSSGSFFFLAELIIDLPLIYDNPSDKDYCGTCTRCVDACPTDAILQDNLIDGSKCISYLTIELKEAIPDDFKGKMENWVFGCDICQDVCPWNRFSKPHKEEAFLPHADLEKSAWEEMTKETFNKVFKRSALKRTKWEGFQRNIHFVKNEAS</sequence>
<keyword id="KW-0004">4Fe-4S</keyword>
<keyword id="KW-0963">Cytoplasm</keyword>
<keyword id="KW-0408">Iron</keyword>
<keyword id="KW-0411">Iron-sulfur</keyword>
<keyword id="KW-0479">Metal-binding</keyword>
<keyword id="KW-0560">Oxidoreductase</keyword>
<keyword id="KW-0671">Queuosine biosynthesis</keyword>
<keyword id="KW-1185">Reference proteome</keyword>
<keyword id="KW-0819">tRNA processing</keyword>
<organism>
    <name type="scientific">Cyclobacterium marinum (strain ATCC 25205 / DSM 745 / LMG 13164 / NCIMB 1802)</name>
    <name type="common">Flectobacillus marinus</name>
    <dbReference type="NCBI Taxonomy" id="880070"/>
    <lineage>
        <taxon>Bacteria</taxon>
        <taxon>Pseudomonadati</taxon>
        <taxon>Bacteroidota</taxon>
        <taxon>Cytophagia</taxon>
        <taxon>Cytophagales</taxon>
        <taxon>Cyclobacteriaceae</taxon>
        <taxon>Cyclobacterium</taxon>
    </lineage>
</organism>
<comment type="function">
    <text evidence="1">Catalyzes the conversion of epoxyqueuosine (oQ) to queuosine (Q), which is a hypermodified base found in the wobble positions of tRNA(Asp), tRNA(Asn), tRNA(His) and tRNA(Tyr).</text>
</comment>
<comment type="catalytic activity">
    <reaction evidence="1">
        <text>epoxyqueuosine(34) in tRNA + AH2 = queuosine(34) in tRNA + A + H2O</text>
        <dbReference type="Rhea" id="RHEA:32159"/>
        <dbReference type="Rhea" id="RHEA-COMP:18571"/>
        <dbReference type="Rhea" id="RHEA-COMP:18582"/>
        <dbReference type="ChEBI" id="CHEBI:13193"/>
        <dbReference type="ChEBI" id="CHEBI:15377"/>
        <dbReference type="ChEBI" id="CHEBI:17499"/>
        <dbReference type="ChEBI" id="CHEBI:194431"/>
        <dbReference type="ChEBI" id="CHEBI:194443"/>
        <dbReference type="EC" id="1.17.99.6"/>
    </reaction>
</comment>
<comment type="cofactor">
    <cofactor evidence="1">
        <name>cob(II)alamin</name>
        <dbReference type="ChEBI" id="CHEBI:16304"/>
    </cofactor>
</comment>
<comment type="cofactor">
    <cofactor evidence="1">
        <name>[4Fe-4S] cluster</name>
        <dbReference type="ChEBI" id="CHEBI:49883"/>
    </cofactor>
    <text evidence="1">Binds 2 [4Fe-4S] clusters per monomer.</text>
</comment>
<comment type="pathway">
    <text evidence="1">tRNA modification; tRNA-queuosine biosynthesis.</text>
</comment>
<comment type="subunit">
    <text evidence="1">Monomer.</text>
</comment>
<comment type="subcellular location">
    <subcellularLocation>
        <location evidence="1">Cytoplasm</location>
    </subcellularLocation>
</comment>
<comment type="similarity">
    <text evidence="1">Belongs to the QueG family.</text>
</comment>
<dbReference type="EC" id="1.17.99.6" evidence="1"/>
<dbReference type="EMBL" id="CP002955">
    <property type="protein sequence ID" value="AEL25849.1"/>
    <property type="molecule type" value="Genomic_DNA"/>
</dbReference>
<dbReference type="RefSeq" id="WP_014020144.1">
    <property type="nucleotide sequence ID" value="NC_015914.1"/>
</dbReference>
<dbReference type="SMR" id="G0J2F8"/>
<dbReference type="STRING" id="880070.Cycma_2103"/>
<dbReference type="KEGG" id="cmr:Cycma_2103"/>
<dbReference type="eggNOG" id="COG1600">
    <property type="taxonomic scope" value="Bacteria"/>
</dbReference>
<dbReference type="HOGENOM" id="CLU_030790_0_0_10"/>
<dbReference type="OrthoDB" id="9784571at2"/>
<dbReference type="UniPathway" id="UPA00392"/>
<dbReference type="Proteomes" id="UP000001635">
    <property type="component" value="Chromosome"/>
</dbReference>
<dbReference type="GO" id="GO:0005737">
    <property type="term" value="C:cytoplasm"/>
    <property type="evidence" value="ECO:0007669"/>
    <property type="project" value="UniProtKB-SubCell"/>
</dbReference>
<dbReference type="GO" id="GO:0051539">
    <property type="term" value="F:4 iron, 4 sulfur cluster binding"/>
    <property type="evidence" value="ECO:0007669"/>
    <property type="project" value="UniProtKB-KW"/>
</dbReference>
<dbReference type="GO" id="GO:0052693">
    <property type="term" value="F:epoxyqueuosine reductase activity"/>
    <property type="evidence" value="ECO:0007669"/>
    <property type="project" value="UniProtKB-UniRule"/>
</dbReference>
<dbReference type="GO" id="GO:0046872">
    <property type="term" value="F:metal ion binding"/>
    <property type="evidence" value="ECO:0007669"/>
    <property type="project" value="UniProtKB-KW"/>
</dbReference>
<dbReference type="GO" id="GO:0008616">
    <property type="term" value="P:queuosine biosynthetic process"/>
    <property type="evidence" value="ECO:0007669"/>
    <property type="project" value="UniProtKB-UniRule"/>
</dbReference>
<dbReference type="GO" id="GO:0006400">
    <property type="term" value="P:tRNA modification"/>
    <property type="evidence" value="ECO:0007669"/>
    <property type="project" value="UniProtKB-UniRule"/>
</dbReference>
<dbReference type="Gene3D" id="3.30.70.20">
    <property type="match status" value="1"/>
</dbReference>
<dbReference type="HAMAP" id="MF_00916">
    <property type="entry name" value="QueG"/>
    <property type="match status" value="1"/>
</dbReference>
<dbReference type="InterPro" id="IPR017896">
    <property type="entry name" value="4Fe4S_Fe-S-bd"/>
</dbReference>
<dbReference type="InterPro" id="IPR017900">
    <property type="entry name" value="4Fe4S_Fe_S_CS"/>
</dbReference>
<dbReference type="InterPro" id="IPR004453">
    <property type="entry name" value="QueG"/>
</dbReference>
<dbReference type="InterPro" id="IPR013542">
    <property type="entry name" value="QueG_DUF1730"/>
</dbReference>
<dbReference type="NCBIfam" id="TIGR00276">
    <property type="entry name" value="tRNA epoxyqueuosine(34) reductase QueG"/>
    <property type="match status" value="1"/>
</dbReference>
<dbReference type="PANTHER" id="PTHR30002">
    <property type="entry name" value="EPOXYQUEUOSINE REDUCTASE"/>
    <property type="match status" value="1"/>
</dbReference>
<dbReference type="PANTHER" id="PTHR30002:SF4">
    <property type="entry name" value="EPOXYQUEUOSINE REDUCTASE"/>
    <property type="match status" value="1"/>
</dbReference>
<dbReference type="Pfam" id="PF13484">
    <property type="entry name" value="Fer4_16"/>
    <property type="match status" value="1"/>
</dbReference>
<dbReference type="Pfam" id="PF08331">
    <property type="entry name" value="QueG_DUF1730"/>
    <property type="match status" value="1"/>
</dbReference>
<dbReference type="SUPFAM" id="SSF46548">
    <property type="entry name" value="alpha-helical ferredoxin"/>
    <property type="match status" value="1"/>
</dbReference>
<dbReference type="PROSITE" id="PS00198">
    <property type="entry name" value="4FE4S_FER_1"/>
    <property type="match status" value="1"/>
</dbReference>
<dbReference type="PROSITE" id="PS51379">
    <property type="entry name" value="4FE4S_FER_2"/>
    <property type="match status" value="1"/>
</dbReference>
<gene>
    <name evidence="1" type="primary">queG</name>
    <name type="ordered locus">Cycma_2103</name>
</gene>